<organism>
    <name type="scientific">Escherichia coli O6:H1 (strain CFT073 / ATCC 700928 / UPEC)</name>
    <dbReference type="NCBI Taxonomy" id="199310"/>
    <lineage>
        <taxon>Bacteria</taxon>
        <taxon>Pseudomonadati</taxon>
        <taxon>Pseudomonadota</taxon>
        <taxon>Gammaproteobacteria</taxon>
        <taxon>Enterobacterales</taxon>
        <taxon>Enterobacteriaceae</taxon>
        <taxon>Escherichia</taxon>
    </lineage>
</organism>
<comment type="function">
    <text evidence="1">Reduces trimethylamine-N-oxide (TMAO) into trimethylamine; an anaerobic reaction coupled to energy-yielding reactions. Can also reduce other N- and S-oxide compounds such as 4-methylmorpholine-N-oxide and biotin sulfoxide (BSO), but with a lower catalytic efficiency (By similarity).</text>
</comment>
<comment type="catalytic activity">
    <reaction>
        <text>trimethylamine + 2 Fe(III)-[cytochrome c] + H2O = trimethylamine N-oxide + 2 Fe(II)-[cytochrome c] + 3 H(+)</text>
        <dbReference type="Rhea" id="RHEA:24236"/>
        <dbReference type="Rhea" id="RHEA-COMP:10350"/>
        <dbReference type="Rhea" id="RHEA-COMP:14399"/>
        <dbReference type="ChEBI" id="CHEBI:15377"/>
        <dbReference type="ChEBI" id="CHEBI:15378"/>
        <dbReference type="ChEBI" id="CHEBI:15724"/>
        <dbReference type="ChEBI" id="CHEBI:29033"/>
        <dbReference type="ChEBI" id="CHEBI:29034"/>
        <dbReference type="ChEBI" id="CHEBI:58389"/>
        <dbReference type="EC" id="1.7.2.3"/>
    </reaction>
</comment>
<comment type="cofactor">
    <cofactor evidence="1">
        <name>Mo-bis(molybdopterin guanine dinucleotide)</name>
        <dbReference type="ChEBI" id="CHEBI:60539"/>
    </cofactor>
    <text evidence="1">Binds 1 molybdenum-bis(molybdopterin guanine dinucleotide) (Mo-bis-MGD) cofactor per subunit.</text>
</comment>
<comment type="subcellular location">
    <subcellularLocation>
        <location evidence="1">Periplasm</location>
    </subcellularLocation>
</comment>
<comment type="PTM">
    <text>Predicted to be exported by the Tat system. The position of the signal peptide cleavage has not been experimentally proven.</text>
</comment>
<comment type="miscellaneous">
    <text evidence="1">Expression of torYZ allows E.coli to grow anaerobically on a wider range of substrates than does expression of torCAD.</text>
</comment>
<comment type="similarity">
    <text evidence="3">Belongs to the prokaryotic molybdopterin-containing oxidoreductase family.</text>
</comment>
<comment type="sequence caution" evidence="3">
    <conflict type="erroneous initiation">
        <sequence resource="EMBL-CDS" id="AAN80743"/>
    </conflict>
</comment>
<accession>Q8CVZ3</accession>
<evidence type="ECO:0000250" key="1"/>
<evidence type="ECO:0000255" key="2">
    <source>
        <dbReference type="PROSITE-ProRule" id="PRU00648"/>
    </source>
</evidence>
<evidence type="ECO:0000305" key="3"/>
<name>TORZ_ECOL6</name>
<gene>
    <name type="primary">torZ</name>
    <name type="synonym">bisZ</name>
    <name type="ordered locus">c2286</name>
</gene>
<reference key="1">
    <citation type="journal article" date="2002" name="Proc. Natl. Acad. Sci. U.S.A.">
        <title>Extensive mosaic structure revealed by the complete genome sequence of uropathogenic Escherichia coli.</title>
        <authorList>
            <person name="Welch R.A."/>
            <person name="Burland V."/>
            <person name="Plunkett G. III"/>
            <person name="Redford P."/>
            <person name="Roesch P."/>
            <person name="Rasko D."/>
            <person name="Buckles E.L."/>
            <person name="Liou S.-R."/>
            <person name="Boutin A."/>
            <person name="Hackett J."/>
            <person name="Stroud D."/>
            <person name="Mayhew G.F."/>
            <person name="Rose D.J."/>
            <person name="Zhou S."/>
            <person name="Schwartz D.C."/>
            <person name="Perna N.T."/>
            <person name="Mobley H.L.T."/>
            <person name="Donnenberg M.S."/>
            <person name="Blattner F.R."/>
        </authorList>
    </citation>
    <scope>NUCLEOTIDE SEQUENCE [LARGE SCALE GENOMIC DNA]</scope>
    <source>
        <strain>CFT073 / ATCC 700928 / UPEC</strain>
    </source>
</reference>
<keyword id="KW-0479">Metal-binding</keyword>
<keyword id="KW-0500">Molybdenum</keyword>
<keyword id="KW-0560">Oxidoreductase</keyword>
<keyword id="KW-0574">Periplasm</keyword>
<keyword id="KW-1185">Reference proteome</keyword>
<keyword id="KW-0732">Signal</keyword>
<proteinExistence type="inferred from homology"/>
<dbReference type="EC" id="1.7.2.3"/>
<dbReference type="EMBL" id="AE014075">
    <property type="protein sequence ID" value="AAN80743.1"/>
    <property type="status" value="ALT_INIT"/>
    <property type="molecule type" value="Genomic_DNA"/>
</dbReference>
<dbReference type="RefSeq" id="WP_000176878.1">
    <property type="nucleotide sequence ID" value="NZ_CP051263.1"/>
</dbReference>
<dbReference type="SMR" id="Q8CVZ3"/>
<dbReference type="STRING" id="199310.c2286"/>
<dbReference type="KEGG" id="ecc:c2286"/>
<dbReference type="eggNOG" id="COG0243">
    <property type="taxonomic scope" value="Bacteria"/>
</dbReference>
<dbReference type="HOGENOM" id="CLU_000422_13_3_6"/>
<dbReference type="Proteomes" id="UP000001410">
    <property type="component" value="Chromosome"/>
</dbReference>
<dbReference type="GO" id="GO:0030288">
    <property type="term" value="C:outer membrane-bounded periplasmic space"/>
    <property type="evidence" value="ECO:0007669"/>
    <property type="project" value="TreeGrafter"/>
</dbReference>
<dbReference type="GO" id="GO:0009055">
    <property type="term" value="F:electron transfer activity"/>
    <property type="evidence" value="ECO:0007669"/>
    <property type="project" value="TreeGrafter"/>
</dbReference>
<dbReference type="GO" id="GO:0030151">
    <property type="term" value="F:molybdenum ion binding"/>
    <property type="evidence" value="ECO:0007669"/>
    <property type="project" value="TreeGrafter"/>
</dbReference>
<dbReference type="GO" id="GO:0043546">
    <property type="term" value="F:molybdopterin cofactor binding"/>
    <property type="evidence" value="ECO:0007669"/>
    <property type="project" value="InterPro"/>
</dbReference>
<dbReference type="GO" id="GO:0050626">
    <property type="term" value="F:trimethylamine-N-oxide reductase (cytochrome c) activity"/>
    <property type="evidence" value="ECO:0007669"/>
    <property type="project" value="UniProtKB-EC"/>
</dbReference>
<dbReference type="GO" id="GO:0009061">
    <property type="term" value="P:anaerobic respiration"/>
    <property type="evidence" value="ECO:0007669"/>
    <property type="project" value="TreeGrafter"/>
</dbReference>
<dbReference type="CDD" id="cd02793">
    <property type="entry name" value="MopB_CT_DMSOR-BSOR-TMAOR"/>
    <property type="match status" value="1"/>
</dbReference>
<dbReference type="CDD" id="cd02769">
    <property type="entry name" value="MopB_DMSOR-BSOR-TMAOR"/>
    <property type="match status" value="1"/>
</dbReference>
<dbReference type="FunFam" id="2.40.40.20:FF:000009">
    <property type="entry name" value="Biotin sulfoxide reductase 2"/>
    <property type="match status" value="1"/>
</dbReference>
<dbReference type="FunFam" id="3.40.228.10:FF:000003">
    <property type="entry name" value="Biotin sulfoxide reductase 2"/>
    <property type="match status" value="1"/>
</dbReference>
<dbReference type="Gene3D" id="2.40.40.20">
    <property type="match status" value="1"/>
</dbReference>
<dbReference type="Gene3D" id="3.40.50.740">
    <property type="match status" value="1"/>
</dbReference>
<dbReference type="Gene3D" id="3.40.228.10">
    <property type="entry name" value="Dimethylsulfoxide Reductase, domain 2"/>
    <property type="match status" value="1"/>
</dbReference>
<dbReference type="Gene3D" id="3.90.55.10">
    <property type="entry name" value="Dimethylsulfoxide Reductase, domain 3"/>
    <property type="match status" value="1"/>
</dbReference>
<dbReference type="InterPro" id="IPR009010">
    <property type="entry name" value="Asp_de-COase-like_dom_sf"/>
</dbReference>
<dbReference type="InterPro" id="IPR006658">
    <property type="entry name" value="BisC"/>
</dbReference>
<dbReference type="InterPro" id="IPR041954">
    <property type="entry name" value="CT_DMSOR/BSOR/TMAOR"/>
</dbReference>
<dbReference type="InterPro" id="IPR041460">
    <property type="entry name" value="Molybdopterin_N"/>
</dbReference>
<dbReference type="InterPro" id="IPR006657">
    <property type="entry name" value="MoPterin_dinucl-bd_dom"/>
</dbReference>
<dbReference type="InterPro" id="IPR006656">
    <property type="entry name" value="Mopterin_OxRdtase"/>
</dbReference>
<dbReference type="InterPro" id="IPR006655">
    <property type="entry name" value="Mopterin_OxRdtase_prok_CS"/>
</dbReference>
<dbReference type="InterPro" id="IPR050612">
    <property type="entry name" value="Prok_Mopterin_Oxidored"/>
</dbReference>
<dbReference type="InterPro" id="IPR006311">
    <property type="entry name" value="TAT_signal"/>
</dbReference>
<dbReference type="InterPro" id="IPR019546">
    <property type="entry name" value="TAT_signal_bac_arc"/>
</dbReference>
<dbReference type="NCBIfam" id="TIGR00509">
    <property type="entry name" value="bisC_fam"/>
    <property type="match status" value="1"/>
</dbReference>
<dbReference type="NCBIfam" id="TIGR01409">
    <property type="entry name" value="TAT_signal_seq"/>
    <property type="match status" value="1"/>
</dbReference>
<dbReference type="PANTHER" id="PTHR43742">
    <property type="entry name" value="TRIMETHYLAMINE-N-OXIDE REDUCTASE"/>
    <property type="match status" value="1"/>
</dbReference>
<dbReference type="PANTHER" id="PTHR43742:SF10">
    <property type="entry name" value="TRIMETHYLAMINE-N-OXIDE REDUCTASE 2"/>
    <property type="match status" value="1"/>
</dbReference>
<dbReference type="Pfam" id="PF00384">
    <property type="entry name" value="Molybdopterin"/>
    <property type="match status" value="1"/>
</dbReference>
<dbReference type="Pfam" id="PF18364">
    <property type="entry name" value="Molybdopterin_N"/>
    <property type="match status" value="1"/>
</dbReference>
<dbReference type="Pfam" id="PF01568">
    <property type="entry name" value="Molydop_binding"/>
    <property type="match status" value="1"/>
</dbReference>
<dbReference type="SUPFAM" id="SSF50692">
    <property type="entry name" value="ADC-like"/>
    <property type="match status" value="1"/>
</dbReference>
<dbReference type="SUPFAM" id="SSF53706">
    <property type="entry name" value="Formate dehydrogenase/DMSO reductase, domains 1-3"/>
    <property type="match status" value="1"/>
</dbReference>
<dbReference type="PROSITE" id="PS00490">
    <property type="entry name" value="MOLYBDOPTERIN_PROK_2"/>
    <property type="match status" value="1"/>
</dbReference>
<dbReference type="PROSITE" id="PS00932">
    <property type="entry name" value="MOLYBDOPTERIN_PROK_3"/>
    <property type="match status" value="1"/>
</dbReference>
<dbReference type="PROSITE" id="PS51318">
    <property type="entry name" value="TAT"/>
    <property type="match status" value="1"/>
</dbReference>
<feature type="signal peptide" description="Tat-type signal" evidence="2">
    <location>
        <begin position="1"/>
        <end position="31"/>
    </location>
</feature>
<feature type="chain" id="PRO_0000019164" description="Trimethylamine-N-oxide reductase 2">
    <location>
        <begin position="32"/>
        <end position="809"/>
    </location>
</feature>
<feature type="binding site" evidence="1">
    <location>
        <position position="176"/>
    </location>
    <ligand>
        <name>Mo-bis(molybdopterin guanine dinucleotide)</name>
        <dbReference type="ChEBI" id="CHEBI:60539"/>
    </ligand>
    <ligandPart>
        <name>Mo</name>
        <dbReference type="ChEBI" id="CHEBI:28685"/>
    </ligandPart>
</feature>
<protein>
    <recommendedName>
        <fullName>Trimethylamine-N-oxide reductase 2</fullName>
        <shortName>TMAO reductase 2</shortName>
        <shortName>Trimethylamine oxidase 2</shortName>
        <ecNumber>1.7.2.3</ecNumber>
    </recommendedName>
</protein>
<sequence length="809" mass="89006">MTLTRREFIKHSGIAAGTLVVTSAAPLPAWAEEKGGKILTAGRWGAMNVEVKDGKIVSSTGALAKTIPNSLQSTAADQVHTTARIQHPMVRKSYLDNPLQPVKGRGEDTYVQVSWEQALKLIHEQHDRIRKANGPSAIFAGSYGWRSSGVLHKAQTLLQRYMNLAGGYSGHSGDYSTGAAQVIMPHVVGSVEVYEQQTSWPLILENSQVVVLWGMNPLNTLKIAWSSTDEQGLEYFHQLKKSGKPVIAIDPIRSETIEFFGDNATWIAPNMGTDVALMLGIAHTLMTQGKHDKVFLEKYTTGYPQFEEYLTGKSDNTPKSAAWAAEITGVPEAQIVKLAELMAANRTMLMAGWGIQRQQYGEQKHWMLVTLAAMLGQIGTPGGGFGFSYHYSNGGNPTRVGGVLPEMSAAIAGQASEAADDGGMTAIPVARIVDALENPGGKYQHNGKEQTYPNIKMIWWAGGGNFTHHQDTNRLIKAWQKPEMIVVSECYWTAAAKHADIVLPITTSFERNDLTMTGDYSNQHIVLMKQAVAPQFEARNDFDVFADLAELLKPGGKEIYTEGKDEMAWLKFFYDAAQKGARAQRVTMPMFNAFWQQNKLIEMRRSEKNEQYIRYGDFRADPVKNALGTPSGKIEIYSRTLEKFGYKDCPAHPTWLAPDEWKGTADEKQLQLLTAHPAHRLHSQLNYAELRKKYAVADREPITIHTEDAARFGIANGDLVRVWNKRGQILTGAVVTDGIKKGVVCVHEGAWPDLENGLCKNGSANVLTADIPSSQLANACAGNSALVYIEKYTGNALKLTAFDQPAVQA</sequence>